<dbReference type="EMBL" id="HF679025">
    <property type="protein sequence ID" value="CCT65195.1"/>
    <property type="molecule type" value="Genomic_DNA"/>
</dbReference>
<dbReference type="SMR" id="S0DRY0"/>
<dbReference type="STRING" id="1279085.S0DRY0"/>
<dbReference type="EnsemblFungi" id="CCT65195">
    <property type="protein sequence ID" value="CCT65195"/>
    <property type="gene ID" value="FFUJ_02117"/>
</dbReference>
<dbReference type="VEuPathDB" id="FungiDB:FFUJ_02117"/>
<dbReference type="HOGENOM" id="CLU_731701_0_0_1"/>
<dbReference type="Proteomes" id="UP000016800">
    <property type="component" value="Chromosome 3"/>
</dbReference>
<dbReference type="GO" id="GO:0005634">
    <property type="term" value="C:nucleus"/>
    <property type="evidence" value="ECO:0007669"/>
    <property type="project" value="UniProtKB-SubCell"/>
</dbReference>
<dbReference type="GO" id="GO:0000981">
    <property type="term" value="F:DNA-binding transcription factor activity, RNA polymerase II-specific"/>
    <property type="evidence" value="ECO:0007669"/>
    <property type="project" value="InterPro"/>
</dbReference>
<dbReference type="GO" id="GO:0008270">
    <property type="term" value="F:zinc ion binding"/>
    <property type="evidence" value="ECO:0007669"/>
    <property type="project" value="InterPro"/>
</dbReference>
<dbReference type="CDD" id="cd00067">
    <property type="entry name" value="GAL4"/>
    <property type="match status" value="1"/>
</dbReference>
<dbReference type="Gene3D" id="4.10.240.10">
    <property type="entry name" value="Zn(2)-C6 fungal-type DNA-binding domain"/>
    <property type="match status" value="1"/>
</dbReference>
<dbReference type="InterPro" id="IPR050797">
    <property type="entry name" value="Carb_Metab_Trans_Reg"/>
</dbReference>
<dbReference type="InterPro" id="IPR036864">
    <property type="entry name" value="Zn2-C6_fun-type_DNA-bd_sf"/>
</dbReference>
<dbReference type="InterPro" id="IPR001138">
    <property type="entry name" value="Zn2Cys6_DnaBD"/>
</dbReference>
<dbReference type="PANTHER" id="PTHR31668">
    <property type="entry name" value="GLUCOSE TRANSPORT TRANSCRIPTION REGULATOR RGT1-RELATED-RELATED"/>
    <property type="match status" value="1"/>
</dbReference>
<dbReference type="Pfam" id="PF00172">
    <property type="entry name" value="Zn_clus"/>
    <property type="match status" value="1"/>
</dbReference>
<dbReference type="SUPFAM" id="SSF57701">
    <property type="entry name" value="Zn2/Cys6 DNA-binding domain"/>
    <property type="match status" value="1"/>
</dbReference>
<dbReference type="PROSITE" id="PS00463">
    <property type="entry name" value="ZN2_CY6_FUNGAL_1"/>
    <property type="match status" value="1"/>
</dbReference>
<dbReference type="PROSITE" id="PS50048">
    <property type="entry name" value="ZN2_CY6_FUNGAL_2"/>
    <property type="match status" value="1"/>
</dbReference>
<evidence type="ECO:0000255" key="1">
    <source>
        <dbReference type="PROSITE-ProRule" id="PRU00227"/>
    </source>
</evidence>
<evidence type="ECO:0000256" key="2">
    <source>
        <dbReference type="SAM" id="MobiDB-lite"/>
    </source>
</evidence>
<evidence type="ECO:0000269" key="3">
    <source>
    </source>
</evidence>
<evidence type="ECO:0000269" key="4">
    <source>
    </source>
</evidence>
<evidence type="ECO:0000269" key="5">
    <source>
    </source>
</evidence>
<evidence type="ECO:0000269" key="6">
    <source>
    </source>
</evidence>
<evidence type="ECO:0000269" key="7">
    <source>
    </source>
</evidence>
<evidence type="ECO:0000269" key="8">
    <source>
    </source>
</evidence>
<evidence type="ECO:0000269" key="9">
    <source>
    </source>
</evidence>
<evidence type="ECO:0000303" key="10">
    <source>
    </source>
</evidence>
<evidence type="ECO:0000305" key="11">
    <source>
    </source>
</evidence>
<comment type="function">
    <text evidence="11">Transcription factor that regulates the expression of the gene cluster that mediates the biosynthesis of fusaric acid, a mycotoxin with low to moderate toxicity to animals and humans, but with high phytotoxic properties (PubMed:26662839).</text>
</comment>
<comment type="subcellular location">
    <subcellularLocation>
        <location evidence="1">Nucleus</location>
    </subcellularLocation>
</comment>
<comment type="biotechnology">
    <text evidence="3 4 5 6 7 8 9">Fusaric acid is phytotoxic to plants such as cotton and banana (PubMed:20955724, PubMed:23922960). It has been shown to induce programmed cell death in plants (PubMed:16868776, PubMed:23838885). In addition to a mild toxicity to animals, fusaric acid exhibits acanthamoebicidal, antioomycete, and antimycobacterial activities (PubMed:17927749, PubMed:21811925, PubMed:22864988).</text>
</comment>
<protein>
    <recommendedName>
        <fullName evidence="10">Fusaric acid cluster transcription factor FUB10</fullName>
    </recommendedName>
    <alternativeName>
        <fullName evidence="10">Fusaric acid biosynthesis protein 10</fullName>
    </alternativeName>
</protein>
<name>FUB10_GIBF5</name>
<accession>S0DRY0</accession>
<organism>
    <name type="scientific">Gibberella fujikuroi (strain CBS 195.34 / IMI 58289 / NRRL A-6831)</name>
    <name type="common">Bakanae and foot rot disease fungus</name>
    <name type="synonym">Fusarium fujikuroi</name>
    <dbReference type="NCBI Taxonomy" id="1279085"/>
    <lineage>
        <taxon>Eukaryota</taxon>
        <taxon>Fungi</taxon>
        <taxon>Dikarya</taxon>
        <taxon>Ascomycota</taxon>
        <taxon>Pezizomycotina</taxon>
        <taxon>Sordariomycetes</taxon>
        <taxon>Hypocreomycetidae</taxon>
        <taxon>Hypocreales</taxon>
        <taxon>Nectriaceae</taxon>
        <taxon>Fusarium</taxon>
        <taxon>Fusarium fujikuroi species complex</taxon>
    </lineage>
</organism>
<proteinExistence type="evidence at protein level"/>
<reference key="1">
    <citation type="journal article" date="2013" name="PLoS Pathog.">
        <title>Deciphering the cryptic genome: genome-wide analyses of the rice pathogen Fusarium fujikuroi reveal complex regulation of secondary metabolism and novel metabolites.</title>
        <authorList>
            <person name="Wiemann P."/>
            <person name="Sieber C.M.K."/>
            <person name="von Bargen K.W."/>
            <person name="Studt L."/>
            <person name="Niehaus E.-M."/>
            <person name="Espino J.J."/>
            <person name="Huss K."/>
            <person name="Michielse C.B."/>
            <person name="Albermann S."/>
            <person name="Wagner D."/>
            <person name="Bergner S.V."/>
            <person name="Connolly L.R."/>
            <person name="Fischer A."/>
            <person name="Reuter G."/>
            <person name="Kleigrewe K."/>
            <person name="Bald T."/>
            <person name="Wingfield B.D."/>
            <person name="Ophir R."/>
            <person name="Freeman S."/>
            <person name="Hippler M."/>
            <person name="Smith K.M."/>
            <person name="Brown D.W."/>
            <person name="Proctor R.H."/>
            <person name="Muensterkoetter M."/>
            <person name="Freitag M."/>
            <person name="Humpf H.-U."/>
            <person name="Gueldener U."/>
            <person name="Tudzynski B."/>
        </authorList>
    </citation>
    <scope>NUCLEOTIDE SEQUENCE [LARGE SCALE GENOMIC DNA]</scope>
    <source>
        <strain>CBS 195.34 / IMI 58289 / NRRL A-6831</strain>
    </source>
</reference>
<reference key="2">
    <citation type="journal article" date="2006" name="Planta">
        <title>Fusaric acid induces apoptosis in saffron root-tip cells: roles of caspase-like activity, cytochrome c, and H2O2.</title>
        <authorList>
            <person name="Samadi L."/>
            <person name="Shahsavan Behboodi B."/>
        </authorList>
    </citation>
    <scope>BIOTECHNOLOGY</scope>
</reference>
<reference key="3">
    <citation type="journal article" date="2008" name="J. Appl. Microbiol.">
        <title>Bikaverin and fusaric acid from Fusarium oxysporum show antioomycete activity against Phytophthora infestans.</title>
        <authorList>
            <person name="Son S.W."/>
            <person name="Kim H.Y."/>
            <person name="Choi G.J."/>
            <person name="Lim H.K."/>
            <person name="Jang K.S."/>
            <person name="Lee S.O."/>
            <person name="Lee S."/>
            <person name="Sung N.D."/>
            <person name="Kim J.C."/>
        </authorList>
    </citation>
    <scope>BIOTECHNOLOGY</scope>
</reference>
<reference key="4">
    <citation type="journal article" date="2011" name="Arch. Pharm. Res.">
        <title>Antimycobacterial activity of fusaric acid from a mangrove endophyte and its metal complexes.</title>
        <authorList>
            <person name="Pan J.H."/>
            <person name="Chen Y."/>
            <person name="Huang Y.H."/>
            <person name="Tao Y.W."/>
            <person name="Wang J."/>
            <person name="Li Y."/>
            <person name="Peng Y."/>
            <person name="Dong T."/>
            <person name="Lai X.M."/>
            <person name="Lin Y.C."/>
        </authorList>
    </citation>
    <scope>BIOTECHNOLOGY</scope>
</reference>
<reference key="5">
    <citation type="journal article" date="2011" name="Toxicon">
        <title>Phytotoxicity of fusaric acid and analogs to cotton.</title>
        <authorList>
            <person name="Stipanovic R.D."/>
            <person name="Puckhaber L.S."/>
            <person name="Liu J."/>
            <person name="Bell A.A."/>
        </authorList>
    </citation>
    <scope>BIOTECHNOLOGY</scope>
</reference>
<reference key="6">
    <citation type="journal article" date="2012" name="Planta Med.">
        <title>In vitro acanthamoebicidal activity of fusaric acid and dehydrofusaric acid from an endophytic fungus Fusarium sp. Tlau3.</title>
        <authorList>
            <person name="Boonman N."/>
            <person name="Prachya S."/>
            <person name="Boonmee A."/>
            <person name="Kittakoop P."/>
            <person name="Wiyakrutta S."/>
            <person name="Sriubolmas N."/>
            <person name="Warit S."/>
            <person name="Dharmkrong-At Chusattayanond A."/>
        </authorList>
    </citation>
    <scope>BIOTECHNOLOGY</scope>
</reference>
<reference key="7">
    <citation type="journal article" date="2013" name="Planta">
        <title>Fusaric acid induction of programmed cell death modulated through nitric oxide signalling in tobacco suspension cells.</title>
        <authorList>
            <person name="Jiao J."/>
            <person name="Zhou B."/>
            <person name="Zhu X."/>
            <person name="Gao Z."/>
            <person name="Liang Y."/>
        </authorList>
    </citation>
    <scope>BIOTECHNOLOGY</scope>
</reference>
<reference key="8">
    <citation type="journal article" date="2013" name="PLoS ONE">
        <title>Contamination of bananas with beauvericin and fusaric acid produced by Fusarium oxysporum f. sp. cubense.</title>
        <authorList>
            <person name="Li C."/>
            <person name="Zuo C."/>
            <person name="Deng G."/>
            <person name="Kuang R."/>
            <person name="Yang Q."/>
            <person name="Hu C."/>
            <person name="Sheng O."/>
            <person name="Zhang S."/>
            <person name="Ma L."/>
            <person name="Wei Y."/>
            <person name="Yang J."/>
            <person name="Liu S."/>
            <person name="Biswas M.K."/>
            <person name="Viljoen A."/>
            <person name="Yi G."/>
        </authorList>
    </citation>
    <scope>BIOTECHNOLOGY</scope>
</reference>
<reference key="9">
    <citation type="journal article" date="2016" name="Environ. Microbiol.">
        <title>Two separate key enzymes and two pathway-specific transcription factors are involved in fusaric acid biosynthesis in Fusarium fujikuroi.</title>
        <authorList>
            <person name="Studt L."/>
            <person name="Janevska S."/>
            <person name="Niehaus E.M."/>
            <person name="Burkhardt I."/>
            <person name="Arndt B."/>
            <person name="Sieber C.M."/>
            <person name="Humpf H.U."/>
            <person name="Dickschat J.S."/>
            <person name="Tudzynski B."/>
        </authorList>
    </citation>
    <scope>FUNCTION</scope>
</reference>
<feature type="chain" id="PRO_0000437327" description="Fusaric acid cluster transcription factor FUB10">
    <location>
        <begin position="1"/>
        <end position="419"/>
    </location>
</feature>
<feature type="DNA-binding region" description="Zn(2)-C6 fungal-type" evidence="1">
    <location>
        <begin position="16"/>
        <end position="47"/>
    </location>
</feature>
<feature type="region of interest" description="Disordered" evidence="2">
    <location>
        <begin position="50"/>
        <end position="92"/>
    </location>
</feature>
<feature type="compositionally biased region" description="Low complexity" evidence="2">
    <location>
        <begin position="74"/>
        <end position="86"/>
    </location>
</feature>
<keyword id="KW-0539">Nucleus</keyword>
<keyword id="KW-1185">Reference proteome</keyword>
<gene>
    <name evidence="10" type="primary">FUB10</name>
    <name type="ORF">FFUJ_02117</name>
</gene>
<sequence length="419" mass="45900">MAGDFSNRAPWKRSACDRCRAQKLRCHRDSGHSTDACLRCLKSGIECVTSKARPTGRPPSRQVQPTVVVEQGDTSSSSHTTDSSPSAGGTDMSNMMNFEYDLSLDNILDSIGMQHSDFIVNDNILVDISPLSSSQSTSQHSVAQAQAQTVDPSTIQSTASYQFNTLPSTSSMDSALPMRSDHVELLLSRLHSKLSAQLYSIRSSPWDVKGTLNLSLAHQGIGQDFENCESHPLVQVSQACTELERLLSGLRAPASAEHTPSTFSYTPAVPPRLRITQLLIALSCYIQIVSIYGIIFSKVFDYLLSTSKTSVGSYQSSPLTLYIGGLPIPPNETLSGNLLVHLIEHQLHQIEQLMGLPEHYRVSSRAKDTKDGELGLFGSQHSQSLLNAAIQLGEDRDGNHDDIRCVRALKIVMRQIKDF</sequence>